<proteinExistence type="inferred from homology"/>
<accession>B0V732</accession>
<keyword id="KW-0028">Amino-acid biosynthesis</keyword>
<keyword id="KW-0057">Aromatic amino acid biosynthesis</keyword>
<keyword id="KW-0456">Lyase</keyword>
<dbReference type="EC" id="4.2.1.10" evidence="1"/>
<dbReference type="EMBL" id="CU459141">
    <property type="protein sequence ID" value="CAM86438.1"/>
    <property type="molecule type" value="Genomic_DNA"/>
</dbReference>
<dbReference type="RefSeq" id="WP_000099412.1">
    <property type="nucleotide sequence ID" value="NZ_JBDGFB010000016.1"/>
</dbReference>
<dbReference type="SMR" id="B0V732"/>
<dbReference type="EnsemblBacteria" id="CAM86438">
    <property type="protein sequence ID" value="CAM86438"/>
    <property type="gene ID" value="ABAYE1539"/>
</dbReference>
<dbReference type="GeneID" id="92894274"/>
<dbReference type="KEGG" id="aby:ABAYE1539"/>
<dbReference type="HOGENOM" id="CLU_090968_1_0_6"/>
<dbReference type="UniPathway" id="UPA00053">
    <property type="reaction ID" value="UER00086"/>
</dbReference>
<dbReference type="GO" id="GO:0003855">
    <property type="term" value="F:3-dehydroquinate dehydratase activity"/>
    <property type="evidence" value="ECO:0007669"/>
    <property type="project" value="UniProtKB-UniRule"/>
</dbReference>
<dbReference type="GO" id="GO:0008652">
    <property type="term" value="P:amino acid biosynthetic process"/>
    <property type="evidence" value="ECO:0007669"/>
    <property type="project" value="UniProtKB-KW"/>
</dbReference>
<dbReference type="GO" id="GO:0009073">
    <property type="term" value="P:aromatic amino acid family biosynthetic process"/>
    <property type="evidence" value="ECO:0007669"/>
    <property type="project" value="UniProtKB-KW"/>
</dbReference>
<dbReference type="GO" id="GO:0009423">
    <property type="term" value="P:chorismate biosynthetic process"/>
    <property type="evidence" value="ECO:0007669"/>
    <property type="project" value="UniProtKB-UniRule"/>
</dbReference>
<dbReference type="GO" id="GO:0019631">
    <property type="term" value="P:quinate catabolic process"/>
    <property type="evidence" value="ECO:0007669"/>
    <property type="project" value="TreeGrafter"/>
</dbReference>
<dbReference type="CDD" id="cd00466">
    <property type="entry name" value="DHQase_II"/>
    <property type="match status" value="1"/>
</dbReference>
<dbReference type="Gene3D" id="3.40.50.9100">
    <property type="entry name" value="Dehydroquinase, class II"/>
    <property type="match status" value="1"/>
</dbReference>
<dbReference type="HAMAP" id="MF_00169">
    <property type="entry name" value="AroQ"/>
    <property type="match status" value="1"/>
</dbReference>
<dbReference type="InterPro" id="IPR001874">
    <property type="entry name" value="DHquinase_II"/>
</dbReference>
<dbReference type="InterPro" id="IPR018509">
    <property type="entry name" value="DHquinase_II_CS"/>
</dbReference>
<dbReference type="InterPro" id="IPR036441">
    <property type="entry name" value="DHquinase_II_sf"/>
</dbReference>
<dbReference type="NCBIfam" id="TIGR01088">
    <property type="entry name" value="aroQ"/>
    <property type="match status" value="1"/>
</dbReference>
<dbReference type="NCBIfam" id="NF003804">
    <property type="entry name" value="PRK05395.1-1"/>
    <property type="match status" value="1"/>
</dbReference>
<dbReference type="NCBIfam" id="NF003805">
    <property type="entry name" value="PRK05395.1-2"/>
    <property type="match status" value="1"/>
</dbReference>
<dbReference type="NCBIfam" id="NF003806">
    <property type="entry name" value="PRK05395.1-3"/>
    <property type="match status" value="1"/>
</dbReference>
<dbReference type="NCBIfam" id="NF003807">
    <property type="entry name" value="PRK05395.1-4"/>
    <property type="match status" value="1"/>
</dbReference>
<dbReference type="PANTHER" id="PTHR21272">
    <property type="entry name" value="CATABOLIC 3-DEHYDROQUINASE"/>
    <property type="match status" value="1"/>
</dbReference>
<dbReference type="PANTHER" id="PTHR21272:SF3">
    <property type="entry name" value="CATABOLIC 3-DEHYDROQUINASE"/>
    <property type="match status" value="1"/>
</dbReference>
<dbReference type="Pfam" id="PF01220">
    <property type="entry name" value="DHquinase_II"/>
    <property type="match status" value="1"/>
</dbReference>
<dbReference type="PIRSF" id="PIRSF001399">
    <property type="entry name" value="DHquinase_II"/>
    <property type="match status" value="1"/>
</dbReference>
<dbReference type="SUPFAM" id="SSF52304">
    <property type="entry name" value="Type II 3-dehydroquinate dehydratase"/>
    <property type="match status" value="1"/>
</dbReference>
<dbReference type="PROSITE" id="PS01029">
    <property type="entry name" value="DEHYDROQUINASE_II"/>
    <property type="match status" value="1"/>
</dbReference>
<sequence>MSSTILVIHGPNLNLLGKREPEVYGHLTLDNINQQLIAQAEQASITLDTFQSNWEGAIVDRIHQAQTEGVKLIIINPAALTHTSVALRDALLGVAIPFIEVHLSNVHAREAFRHHSYLSDKAIGVICGLGAKGYSFALDYAIEKIQPSNPN</sequence>
<comment type="function">
    <text evidence="1">Catalyzes a trans-dehydration via an enolate intermediate.</text>
</comment>
<comment type="catalytic activity">
    <reaction evidence="1">
        <text>3-dehydroquinate = 3-dehydroshikimate + H2O</text>
        <dbReference type="Rhea" id="RHEA:21096"/>
        <dbReference type="ChEBI" id="CHEBI:15377"/>
        <dbReference type="ChEBI" id="CHEBI:16630"/>
        <dbReference type="ChEBI" id="CHEBI:32364"/>
        <dbReference type="EC" id="4.2.1.10"/>
    </reaction>
</comment>
<comment type="pathway">
    <text evidence="1">Metabolic intermediate biosynthesis; chorismate biosynthesis; chorismate from D-erythrose 4-phosphate and phosphoenolpyruvate: step 3/7.</text>
</comment>
<comment type="subunit">
    <text evidence="1">Homododecamer.</text>
</comment>
<comment type="similarity">
    <text evidence="1">Belongs to the type-II 3-dehydroquinase family.</text>
</comment>
<protein>
    <recommendedName>
        <fullName evidence="1">3-dehydroquinate dehydratase</fullName>
        <shortName evidence="1">3-dehydroquinase</shortName>
        <ecNumber evidence="1">4.2.1.10</ecNumber>
    </recommendedName>
    <alternativeName>
        <fullName evidence="1">Type II DHQase</fullName>
    </alternativeName>
</protein>
<evidence type="ECO:0000255" key="1">
    <source>
        <dbReference type="HAMAP-Rule" id="MF_00169"/>
    </source>
</evidence>
<organism>
    <name type="scientific">Acinetobacter baumannii (strain AYE)</name>
    <dbReference type="NCBI Taxonomy" id="509173"/>
    <lineage>
        <taxon>Bacteria</taxon>
        <taxon>Pseudomonadati</taxon>
        <taxon>Pseudomonadota</taxon>
        <taxon>Gammaproteobacteria</taxon>
        <taxon>Moraxellales</taxon>
        <taxon>Moraxellaceae</taxon>
        <taxon>Acinetobacter</taxon>
        <taxon>Acinetobacter calcoaceticus/baumannii complex</taxon>
    </lineage>
</organism>
<reference key="1">
    <citation type="journal article" date="2008" name="PLoS ONE">
        <title>Comparative analysis of Acinetobacters: three genomes for three lifestyles.</title>
        <authorList>
            <person name="Vallenet D."/>
            <person name="Nordmann P."/>
            <person name="Barbe V."/>
            <person name="Poirel L."/>
            <person name="Mangenot S."/>
            <person name="Bataille E."/>
            <person name="Dossat C."/>
            <person name="Gas S."/>
            <person name="Kreimeyer A."/>
            <person name="Lenoble P."/>
            <person name="Oztas S."/>
            <person name="Poulain J."/>
            <person name="Segurens B."/>
            <person name="Robert C."/>
            <person name="Abergel C."/>
            <person name="Claverie J.-M."/>
            <person name="Raoult D."/>
            <person name="Medigue C."/>
            <person name="Weissenbach J."/>
            <person name="Cruveiller S."/>
        </authorList>
    </citation>
    <scope>NUCLEOTIDE SEQUENCE [LARGE SCALE GENOMIC DNA]</scope>
    <source>
        <strain>AYE</strain>
    </source>
</reference>
<gene>
    <name evidence="1" type="primary">aroQ</name>
    <name type="ordered locus">ABAYE1539</name>
</gene>
<name>AROQ_ACIBY</name>
<feature type="chain" id="PRO_1000097588" description="3-dehydroquinate dehydratase">
    <location>
        <begin position="1"/>
        <end position="151"/>
    </location>
</feature>
<feature type="active site" description="Proton acceptor" evidence="1">
    <location>
        <position position="24"/>
    </location>
</feature>
<feature type="active site" description="Proton donor" evidence="1">
    <location>
        <position position="102"/>
    </location>
</feature>
<feature type="binding site" evidence="1">
    <location>
        <position position="76"/>
    </location>
    <ligand>
        <name>substrate</name>
    </ligand>
</feature>
<feature type="binding site" evidence="1">
    <location>
        <position position="82"/>
    </location>
    <ligand>
        <name>substrate</name>
    </ligand>
</feature>
<feature type="binding site" evidence="1">
    <location>
        <position position="89"/>
    </location>
    <ligand>
        <name>substrate</name>
    </ligand>
</feature>
<feature type="binding site" evidence="1">
    <location>
        <begin position="103"/>
        <end position="104"/>
    </location>
    <ligand>
        <name>substrate</name>
    </ligand>
</feature>
<feature type="binding site" evidence="1">
    <location>
        <position position="113"/>
    </location>
    <ligand>
        <name>substrate</name>
    </ligand>
</feature>
<feature type="site" description="Transition state stabilizer" evidence="1">
    <location>
        <position position="19"/>
    </location>
</feature>